<proteinExistence type="inferred from homology"/>
<name>TRMD_BARBK</name>
<protein>
    <recommendedName>
        <fullName evidence="1">tRNA (guanine-N(1)-)-methyltransferase</fullName>
        <ecNumber evidence="1">2.1.1.228</ecNumber>
    </recommendedName>
    <alternativeName>
        <fullName evidence="1">M1G-methyltransferase</fullName>
    </alternativeName>
    <alternativeName>
        <fullName evidence="1">tRNA [GM37] methyltransferase</fullName>
    </alternativeName>
</protein>
<reference key="1">
    <citation type="submission" date="2006-12" db="EMBL/GenBank/DDBJ databases">
        <authorList>
            <person name="Hendrix L."/>
            <person name="Mohamoud Y."/>
            <person name="Radune D."/>
            <person name="Shvartsbeyn A."/>
            <person name="Daugherty S."/>
            <person name="Dodson R."/>
            <person name="Durkin A.S."/>
            <person name="Harkins D."/>
            <person name="Huot H."/>
            <person name="Kothari S.P."/>
            <person name="Madupu R."/>
            <person name="Li J."/>
            <person name="Nelson W.C."/>
            <person name="Shrivastava S."/>
            <person name="Giglio M.G."/>
            <person name="Haft D."/>
            <person name="Selengut J."/>
            <person name="Fraser-Ligget C."/>
            <person name="Seshadri R."/>
        </authorList>
    </citation>
    <scope>NUCLEOTIDE SEQUENCE [LARGE SCALE GENOMIC DNA]</scope>
    <source>
        <strain>ATCC 35685 / KC583 / Herrer 020/F12,63</strain>
    </source>
</reference>
<organism>
    <name type="scientific">Bartonella bacilliformis (strain ATCC 35685 / KC583 / Herrer 020/F12,63)</name>
    <dbReference type="NCBI Taxonomy" id="360095"/>
    <lineage>
        <taxon>Bacteria</taxon>
        <taxon>Pseudomonadati</taxon>
        <taxon>Pseudomonadota</taxon>
        <taxon>Alphaproteobacteria</taxon>
        <taxon>Hyphomicrobiales</taxon>
        <taxon>Bartonellaceae</taxon>
        <taxon>Bartonella</taxon>
    </lineage>
</organism>
<feature type="chain" id="PRO_1000006452" description="tRNA (guanine-N(1)-)-methyltransferase">
    <location>
        <begin position="1"/>
        <end position="232"/>
    </location>
</feature>
<feature type="binding site" evidence="1">
    <location>
        <position position="111"/>
    </location>
    <ligand>
        <name>S-adenosyl-L-methionine</name>
        <dbReference type="ChEBI" id="CHEBI:59789"/>
    </ligand>
</feature>
<feature type="binding site" evidence="1">
    <location>
        <begin position="131"/>
        <end position="136"/>
    </location>
    <ligand>
        <name>S-adenosyl-L-methionine</name>
        <dbReference type="ChEBI" id="CHEBI:59789"/>
    </ligand>
</feature>
<accession>A1UR21</accession>
<gene>
    <name evidence="1" type="primary">trmD</name>
    <name type="ordered locus">BARBAKC583_0086</name>
</gene>
<keyword id="KW-0963">Cytoplasm</keyword>
<keyword id="KW-0489">Methyltransferase</keyword>
<keyword id="KW-0949">S-adenosyl-L-methionine</keyword>
<keyword id="KW-0808">Transferase</keyword>
<keyword id="KW-0819">tRNA processing</keyword>
<evidence type="ECO:0000255" key="1">
    <source>
        <dbReference type="HAMAP-Rule" id="MF_00605"/>
    </source>
</evidence>
<sequence length="232" mass="25586">MTFQAHVVTLYPEMFPGVLGHSLAGRALERGIWSLNTVQIRDFALDKHHSVDDTPAGGGAGMVMRADVLVAAIDHCPPDLPRILLSPRGRPFNQAHARSLASDRGVVLVCGRFEGVDERVLQARKLEEISIGDYILSGGETAALVLLDALVRLLPGVMGNQASGECESFENGLLEHPHYTRPPVFEGLEIPLVLTSGHHKAIADWRQEQAEMLTQKRRPDLYAIYNKNRRKT</sequence>
<comment type="function">
    <text evidence="1">Specifically methylates guanosine-37 in various tRNAs.</text>
</comment>
<comment type="catalytic activity">
    <reaction evidence="1">
        <text>guanosine(37) in tRNA + S-adenosyl-L-methionine = N(1)-methylguanosine(37) in tRNA + S-adenosyl-L-homocysteine + H(+)</text>
        <dbReference type="Rhea" id="RHEA:36899"/>
        <dbReference type="Rhea" id="RHEA-COMP:10145"/>
        <dbReference type="Rhea" id="RHEA-COMP:10147"/>
        <dbReference type="ChEBI" id="CHEBI:15378"/>
        <dbReference type="ChEBI" id="CHEBI:57856"/>
        <dbReference type="ChEBI" id="CHEBI:59789"/>
        <dbReference type="ChEBI" id="CHEBI:73542"/>
        <dbReference type="ChEBI" id="CHEBI:74269"/>
        <dbReference type="EC" id="2.1.1.228"/>
    </reaction>
</comment>
<comment type="subunit">
    <text evidence="1">Homodimer.</text>
</comment>
<comment type="subcellular location">
    <subcellularLocation>
        <location evidence="1">Cytoplasm</location>
    </subcellularLocation>
</comment>
<comment type="similarity">
    <text evidence="1">Belongs to the RNA methyltransferase TrmD family.</text>
</comment>
<dbReference type="EC" id="2.1.1.228" evidence="1"/>
<dbReference type="EMBL" id="CP000524">
    <property type="protein sequence ID" value="ABM44575.1"/>
    <property type="molecule type" value="Genomic_DNA"/>
</dbReference>
<dbReference type="RefSeq" id="WP_005765833.1">
    <property type="nucleotide sequence ID" value="NC_008783.1"/>
</dbReference>
<dbReference type="SMR" id="A1UR21"/>
<dbReference type="STRING" id="360095.BARBAKC583_0086"/>
<dbReference type="GeneID" id="4684386"/>
<dbReference type="KEGG" id="bbk:BARBAKC583_0086"/>
<dbReference type="PATRIC" id="fig|360095.6.peg.86"/>
<dbReference type="eggNOG" id="COG0336">
    <property type="taxonomic scope" value="Bacteria"/>
</dbReference>
<dbReference type="HOGENOM" id="CLU_047363_0_1_5"/>
<dbReference type="OrthoDB" id="9807416at2"/>
<dbReference type="Proteomes" id="UP000000643">
    <property type="component" value="Chromosome"/>
</dbReference>
<dbReference type="GO" id="GO:0005829">
    <property type="term" value="C:cytosol"/>
    <property type="evidence" value="ECO:0007669"/>
    <property type="project" value="TreeGrafter"/>
</dbReference>
<dbReference type="GO" id="GO:0052906">
    <property type="term" value="F:tRNA (guanine(37)-N1)-methyltransferase activity"/>
    <property type="evidence" value="ECO:0007669"/>
    <property type="project" value="UniProtKB-UniRule"/>
</dbReference>
<dbReference type="GO" id="GO:0002939">
    <property type="term" value="P:tRNA N1-guanine methylation"/>
    <property type="evidence" value="ECO:0007669"/>
    <property type="project" value="TreeGrafter"/>
</dbReference>
<dbReference type="CDD" id="cd18080">
    <property type="entry name" value="TrmD-like"/>
    <property type="match status" value="1"/>
</dbReference>
<dbReference type="FunFam" id="3.40.1280.10:FF:000001">
    <property type="entry name" value="tRNA (guanine-N(1)-)-methyltransferase"/>
    <property type="match status" value="1"/>
</dbReference>
<dbReference type="Gene3D" id="3.40.1280.10">
    <property type="match status" value="1"/>
</dbReference>
<dbReference type="Gene3D" id="1.10.1270.20">
    <property type="entry name" value="tRNA(m1g37)methyltransferase, domain 2"/>
    <property type="match status" value="1"/>
</dbReference>
<dbReference type="HAMAP" id="MF_00605">
    <property type="entry name" value="TrmD"/>
    <property type="match status" value="1"/>
</dbReference>
<dbReference type="InterPro" id="IPR029028">
    <property type="entry name" value="Alpha/beta_knot_MTases"/>
</dbReference>
<dbReference type="InterPro" id="IPR023148">
    <property type="entry name" value="tRNA_m1G_MeTrfase_C_sf"/>
</dbReference>
<dbReference type="InterPro" id="IPR002649">
    <property type="entry name" value="tRNA_m1G_MeTrfase_TrmD"/>
</dbReference>
<dbReference type="InterPro" id="IPR029026">
    <property type="entry name" value="tRNA_m1G_MTases_N"/>
</dbReference>
<dbReference type="InterPro" id="IPR016009">
    <property type="entry name" value="tRNA_MeTrfase_TRMD/TRM10"/>
</dbReference>
<dbReference type="NCBIfam" id="NF000648">
    <property type="entry name" value="PRK00026.1"/>
    <property type="match status" value="1"/>
</dbReference>
<dbReference type="NCBIfam" id="TIGR00088">
    <property type="entry name" value="trmD"/>
    <property type="match status" value="1"/>
</dbReference>
<dbReference type="PANTHER" id="PTHR46417">
    <property type="entry name" value="TRNA (GUANINE-N(1)-)-METHYLTRANSFERASE"/>
    <property type="match status" value="1"/>
</dbReference>
<dbReference type="PANTHER" id="PTHR46417:SF1">
    <property type="entry name" value="TRNA (GUANINE-N(1)-)-METHYLTRANSFERASE"/>
    <property type="match status" value="1"/>
</dbReference>
<dbReference type="Pfam" id="PF01746">
    <property type="entry name" value="tRNA_m1G_MT"/>
    <property type="match status" value="1"/>
</dbReference>
<dbReference type="PIRSF" id="PIRSF000386">
    <property type="entry name" value="tRNA_mtase"/>
    <property type="match status" value="1"/>
</dbReference>
<dbReference type="SUPFAM" id="SSF75217">
    <property type="entry name" value="alpha/beta knot"/>
    <property type="match status" value="1"/>
</dbReference>